<accession>B3RBH4</accession>
<organism>
    <name type="scientific">Cupriavidus taiwanensis (strain DSM 17343 / BCRC 17206 / CCUG 44338 / CIP 107171 / LMG 19424 / R1)</name>
    <name type="common">Ralstonia taiwanensis (strain LMG 19424)</name>
    <dbReference type="NCBI Taxonomy" id="977880"/>
    <lineage>
        <taxon>Bacteria</taxon>
        <taxon>Pseudomonadati</taxon>
        <taxon>Pseudomonadota</taxon>
        <taxon>Betaproteobacteria</taxon>
        <taxon>Burkholderiales</taxon>
        <taxon>Burkholderiaceae</taxon>
        <taxon>Cupriavidus</taxon>
    </lineage>
</organism>
<proteinExistence type="inferred from homology"/>
<comment type="function">
    <text evidence="1">Involved in phosphonate degradation.</text>
</comment>
<comment type="catalytic activity">
    <reaction evidence="1">
        <text>(2-aminoethyl)phosphonate + pyruvate = phosphonoacetaldehyde + L-alanine</text>
        <dbReference type="Rhea" id="RHEA:17021"/>
        <dbReference type="ChEBI" id="CHEBI:15361"/>
        <dbReference type="ChEBI" id="CHEBI:57418"/>
        <dbReference type="ChEBI" id="CHEBI:57972"/>
        <dbReference type="ChEBI" id="CHEBI:58383"/>
        <dbReference type="EC" id="2.6.1.37"/>
    </reaction>
</comment>
<comment type="cofactor">
    <cofactor evidence="1">
        <name>pyridoxal 5'-phosphate</name>
        <dbReference type="ChEBI" id="CHEBI:597326"/>
    </cofactor>
</comment>
<comment type="subunit">
    <text evidence="1">Homodimer.</text>
</comment>
<comment type="similarity">
    <text evidence="1">Belongs to the class-V pyridoxal-phosphate-dependent aminotransferase family. PhnW subfamily.</text>
</comment>
<sequence length="377" mass="40963">MIRGNDPILLTPGPLTTSLATKQAMLRDWGSWDAAFNTITRSLCDDLVRIVHGEGTHVCVPMQGSGTFSVEAAIANVVPRDGKVLVPQNGAYCQRILKICKVLGRASVELPIPEDQPASAALIEDALRRDPSITHVAQVHCETGAGVLNPLQDIALLCQRLGKGLIVDAMSSFGAIEIDARTMPFDALVAATGKCIEGVPGMGFVLVKKDVLEASQGNSHSLALDLHDQYVYMQKTTQWRFTPPTHVVAAFRAALDQFLEEGGQPVRGARYRRNCDTLVKGMAALGFRTFLPTAVQAPIIVTFHAPADARYDFKTFYAKVRERGYILYPGKLTQVETFRVGCIGAIDDNEMRNVVTAIGEVLREMGIEMQGRLAEAA</sequence>
<feature type="chain" id="PRO_1000144852" description="2-aminoethylphosphonate--pyruvate transaminase">
    <location>
        <begin position="1"/>
        <end position="377"/>
    </location>
</feature>
<feature type="modified residue" description="N6-(pyridoxal phosphate)lysine" evidence="1">
    <location>
        <position position="194"/>
    </location>
</feature>
<dbReference type="EC" id="2.6.1.37" evidence="1"/>
<dbReference type="EMBL" id="CU633750">
    <property type="protein sequence ID" value="CAQ72249.1"/>
    <property type="molecule type" value="Genomic_DNA"/>
</dbReference>
<dbReference type="RefSeq" id="WP_012356464.1">
    <property type="nucleotide sequence ID" value="NC_010530.1"/>
</dbReference>
<dbReference type="SMR" id="B3RBH4"/>
<dbReference type="GeneID" id="29765238"/>
<dbReference type="KEGG" id="cti:RALTA_B1654"/>
<dbReference type="eggNOG" id="COG0075">
    <property type="taxonomic scope" value="Bacteria"/>
</dbReference>
<dbReference type="HOGENOM" id="CLU_027686_3_1_4"/>
<dbReference type="BioCyc" id="CTAI977880:RALTA_RS23605-MONOMER"/>
<dbReference type="Proteomes" id="UP000001692">
    <property type="component" value="Chromosome 2"/>
</dbReference>
<dbReference type="GO" id="GO:0047304">
    <property type="term" value="F:2-aminoethylphosphonate-pyruvate transaminase activity"/>
    <property type="evidence" value="ECO:0007669"/>
    <property type="project" value="UniProtKB-UniRule"/>
</dbReference>
<dbReference type="GO" id="GO:0019700">
    <property type="term" value="P:organic phosphonate catabolic process"/>
    <property type="evidence" value="ECO:0007669"/>
    <property type="project" value="InterPro"/>
</dbReference>
<dbReference type="Gene3D" id="3.90.1150.10">
    <property type="entry name" value="Aspartate Aminotransferase, domain 1"/>
    <property type="match status" value="1"/>
</dbReference>
<dbReference type="Gene3D" id="3.40.640.10">
    <property type="entry name" value="Type I PLP-dependent aspartate aminotransferase-like (Major domain)"/>
    <property type="match status" value="1"/>
</dbReference>
<dbReference type="HAMAP" id="MF_01376">
    <property type="entry name" value="PhnW_aminotrans_5"/>
    <property type="match status" value="1"/>
</dbReference>
<dbReference type="InterPro" id="IPR000192">
    <property type="entry name" value="Aminotrans_V_dom"/>
</dbReference>
<dbReference type="InterPro" id="IPR012703">
    <property type="entry name" value="NH2EtPonate_pyrv_transaminase"/>
</dbReference>
<dbReference type="InterPro" id="IPR015424">
    <property type="entry name" value="PyrdxlP-dep_Trfase"/>
</dbReference>
<dbReference type="InterPro" id="IPR015421">
    <property type="entry name" value="PyrdxlP-dep_Trfase_major"/>
</dbReference>
<dbReference type="InterPro" id="IPR015422">
    <property type="entry name" value="PyrdxlP-dep_Trfase_small"/>
</dbReference>
<dbReference type="InterPro" id="IPR024169">
    <property type="entry name" value="SP_NH2Trfase/AEP_transaminase"/>
</dbReference>
<dbReference type="NCBIfam" id="TIGR03301">
    <property type="entry name" value="PhnW-AepZ"/>
    <property type="match status" value="1"/>
</dbReference>
<dbReference type="NCBIfam" id="NF010006">
    <property type="entry name" value="PRK13479.1"/>
    <property type="match status" value="1"/>
</dbReference>
<dbReference type="NCBIfam" id="TIGR02326">
    <property type="entry name" value="transamin_PhnW"/>
    <property type="match status" value="1"/>
</dbReference>
<dbReference type="PANTHER" id="PTHR42778">
    <property type="entry name" value="2-AMINOETHYLPHOSPHONATE--PYRUVATE TRANSAMINASE"/>
    <property type="match status" value="1"/>
</dbReference>
<dbReference type="PANTHER" id="PTHR42778:SF1">
    <property type="entry name" value="2-AMINOETHYLPHOSPHONATE--PYRUVATE TRANSAMINASE"/>
    <property type="match status" value="1"/>
</dbReference>
<dbReference type="Pfam" id="PF00266">
    <property type="entry name" value="Aminotran_5"/>
    <property type="match status" value="1"/>
</dbReference>
<dbReference type="PIRSF" id="PIRSF000524">
    <property type="entry name" value="SPT"/>
    <property type="match status" value="1"/>
</dbReference>
<dbReference type="SUPFAM" id="SSF53383">
    <property type="entry name" value="PLP-dependent transferases"/>
    <property type="match status" value="1"/>
</dbReference>
<evidence type="ECO:0000255" key="1">
    <source>
        <dbReference type="HAMAP-Rule" id="MF_01376"/>
    </source>
</evidence>
<protein>
    <recommendedName>
        <fullName evidence="1">2-aminoethylphosphonate--pyruvate transaminase</fullName>
        <ecNumber evidence="1">2.6.1.37</ecNumber>
    </recommendedName>
    <alternativeName>
        <fullName evidence="1">2-aminoethylphosphonate aminotransferase</fullName>
    </alternativeName>
    <alternativeName>
        <fullName evidence="1">AEP transaminase</fullName>
        <shortName evidence="1">AEPT</shortName>
    </alternativeName>
</protein>
<gene>
    <name evidence="1" type="primary">phnW</name>
    <name type="ordered locus">RALTA_B1654</name>
</gene>
<keyword id="KW-0032">Aminotransferase</keyword>
<keyword id="KW-0663">Pyridoxal phosphate</keyword>
<keyword id="KW-0670">Pyruvate</keyword>
<keyword id="KW-0808">Transferase</keyword>
<reference key="1">
    <citation type="journal article" date="2008" name="Genome Res.">
        <title>Genome sequence of the beta-rhizobium Cupriavidus taiwanensis and comparative genomics of rhizobia.</title>
        <authorList>
            <person name="Amadou C."/>
            <person name="Pascal G."/>
            <person name="Mangenot S."/>
            <person name="Glew M."/>
            <person name="Bontemps C."/>
            <person name="Capela D."/>
            <person name="Carrere S."/>
            <person name="Cruveiller S."/>
            <person name="Dossat C."/>
            <person name="Lajus A."/>
            <person name="Marchetti M."/>
            <person name="Poinsot V."/>
            <person name="Rouy Z."/>
            <person name="Servin B."/>
            <person name="Saad M."/>
            <person name="Schenowitz C."/>
            <person name="Barbe V."/>
            <person name="Batut J."/>
            <person name="Medigue C."/>
            <person name="Masson-Boivin C."/>
        </authorList>
    </citation>
    <scope>NUCLEOTIDE SEQUENCE [LARGE SCALE GENOMIC DNA]</scope>
    <source>
        <strain>DSM 17343 / BCRC 17206 / CCUG 44338 / CIP 107171 / LMG 19424 / R1</strain>
    </source>
</reference>
<name>PHNW_CUPTR</name>